<keyword id="KW-0687">Ribonucleoprotein</keyword>
<keyword id="KW-0689">Ribosomal protein</keyword>
<evidence type="ECO:0000255" key="1">
    <source>
        <dbReference type="HAMAP-Rule" id="MF_00532"/>
    </source>
</evidence>
<evidence type="ECO:0000305" key="2"/>
<gene>
    <name evidence="1" type="primary">rpsI</name>
    <name type="ordered locus">KPN78578_35980</name>
    <name type="ORF">KPN_03629</name>
</gene>
<feature type="chain" id="PRO_1000051238" description="Small ribosomal subunit protein uS9">
    <location>
        <begin position="1"/>
        <end position="130"/>
    </location>
</feature>
<sequence>MAENQYYGTGRRKSSAARVFIKPGNGKIVINQRSLEQYFGRETARMVVRQPLELVDMVEKLDLYITVKGGGISGQAGAIRHGITRALMEYDESLRSELRKAGFVTRDARQVERKKVGLRKARRRPQFSKR</sequence>
<proteinExistence type="inferred from homology"/>
<protein>
    <recommendedName>
        <fullName evidence="1">Small ribosomal subunit protein uS9</fullName>
    </recommendedName>
    <alternativeName>
        <fullName evidence="2">30S ribosomal protein S9</fullName>
    </alternativeName>
</protein>
<reference key="1">
    <citation type="submission" date="2006-09" db="EMBL/GenBank/DDBJ databases">
        <authorList>
            <consortium name="The Klebsiella pneumonia Genome Sequencing Project"/>
            <person name="McClelland M."/>
            <person name="Sanderson E.K."/>
            <person name="Spieth J."/>
            <person name="Clifton W.S."/>
            <person name="Latreille P."/>
            <person name="Sabo A."/>
            <person name="Pepin K."/>
            <person name="Bhonagiri V."/>
            <person name="Porwollik S."/>
            <person name="Ali J."/>
            <person name="Wilson R.K."/>
        </authorList>
    </citation>
    <scope>NUCLEOTIDE SEQUENCE [LARGE SCALE GENOMIC DNA]</scope>
    <source>
        <strain>ATCC 700721 / MGH 78578</strain>
    </source>
</reference>
<name>RS9_KLEP7</name>
<organism>
    <name type="scientific">Klebsiella pneumoniae subsp. pneumoniae (strain ATCC 700721 / MGH 78578)</name>
    <dbReference type="NCBI Taxonomy" id="272620"/>
    <lineage>
        <taxon>Bacteria</taxon>
        <taxon>Pseudomonadati</taxon>
        <taxon>Pseudomonadota</taxon>
        <taxon>Gammaproteobacteria</taxon>
        <taxon>Enterobacterales</taxon>
        <taxon>Enterobacteriaceae</taxon>
        <taxon>Klebsiella/Raoultella group</taxon>
        <taxon>Klebsiella</taxon>
        <taxon>Klebsiella pneumoniae complex</taxon>
    </lineage>
</organism>
<accession>A6TEN8</accession>
<dbReference type="EMBL" id="CP000647">
    <property type="protein sequence ID" value="ABR79022.1"/>
    <property type="molecule type" value="Genomic_DNA"/>
</dbReference>
<dbReference type="RefSeq" id="WP_000829818.1">
    <property type="nucleotide sequence ID" value="NC_009648.1"/>
</dbReference>
<dbReference type="SMR" id="A6TEN8"/>
<dbReference type="STRING" id="272620.KPN_03629"/>
<dbReference type="jPOST" id="A6TEN8"/>
<dbReference type="PaxDb" id="272620-KPN_03629"/>
<dbReference type="EnsemblBacteria" id="ABR79022">
    <property type="protein sequence ID" value="ABR79022"/>
    <property type="gene ID" value="KPN_03629"/>
</dbReference>
<dbReference type="GeneID" id="98390344"/>
<dbReference type="KEGG" id="kpn:KPN_03629"/>
<dbReference type="HOGENOM" id="CLU_046483_2_1_6"/>
<dbReference type="Proteomes" id="UP000000265">
    <property type="component" value="Chromosome"/>
</dbReference>
<dbReference type="GO" id="GO:0022627">
    <property type="term" value="C:cytosolic small ribosomal subunit"/>
    <property type="evidence" value="ECO:0007669"/>
    <property type="project" value="TreeGrafter"/>
</dbReference>
<dbReference type="GO" id="GO:0003723">
    <property type="term" value="F:RNA binding"/>
    <property type="evidence" value="ECO:0007669"/>
    <property type="project" value="TreeGrafter"/>
</dbReference>
<dbReference type="GO" id="GO:0003735">
    <property type="term" value="F:structural constituent of ribosome"/>
    <property type="evidence" value="ECO:0007669"/>
    <property type="project" value="InterPro"/>
</dbReference>
<dbReference type="GO" id="GO:0006412">
    <property type="term" value="P:translation"/>
    <property type="evidence" value="ECO:0007669"/>
    <property type="project" value="UniProtKB-UniRule"/>
</dbReference>
<dbReference type="FunFam" id="3.30.230.10:FF:000001">
    <property type="entry name" value="30S ribosomal protein S9"/>
    <property type="match status" value="1"/>
</dbReference>
<dbReference type="Gene3D" id="3.30.230.10">
    <property type="match status" value="1"/>
</dbReference>
<dbReference type="HAMAP" id="MF_00532_B">
    <property type="entry name" value="Ribosomal_uS9_B"/>
    <property type="match status" value="1"/>
</dbReference>
<dbReference type="InterPro" id="IPR020568">
    <property type="entry name" value="Ribosomal_Su5_D2-typ_SF"/>
</dbReference>
<dbReference type="InterPro" id="IPR000754">
    <property type="entry name" value="Ribosomal_uS9"/>
</dbReference>
<dbReference type="InterPro" id="IPR023035">
    <property type="entry name" value="Ribosomal_uS9_bac/plastid"/>
</dbReference>
<dbReference type="InterPro" id="IPR020574">
    <property type="entry name" value="Ribosomal_uS9_CS"/>
</dbReference>
<dbReference type="InterPro" id="IPR014721">
    <property type="entry name" value="Ribsml_uS5_D2-typ_fold_subgr"/>
</dbReference>
<dbReference type="NCBIfam" id="NF001099">
    <property type="entry name" value="PRK00132.1"/>
    <property type="match status" value="1"/>
</dbReference>
<dbReference type="PANTHER" id="PTHR21569">
    <property type="entry name" value="RIBOSOMAL PROTEIN S9"/>
    <property type="match status" value="1"/>
</dbReference>
<dbReference type="PANTHER" id="PTHR21569:SF1">
    <property type="entry name" value="SMALL RIBOSOMAL SUBUNIT PROTEIN US9M"/>
    <property type="match status" value="1"/>
</dbReference>
<dbReference type="Pfam" id="PF00380">
    <property type="entry name" value="Ribosomal_S9"/>
    <property type="match status" value="1"/>
</dbReference>
<dbReference type="SUPFAM" id="SSF54211">
    <property type="entry name" value="Ribosomal protein S5 domain 2-like"/>
    <property type="match status" value="1"/>
</dbReference>
<dbReference type="PROSITE" id="PS00360">
    <property type="entry name" value="RIBOSOMAL_S9"/>
    <property type="match status" value="1"/>
</dbReference>
<comment type="similarity">
    <text evidence="1">Belongs to the universal ribosomal protein uS9 family.</text>
</comment>